<reference key="1">
    <citation type="submission" date="2005-05" db="EMBL/GenBank/DDBJ databases">
        <title>Gene organization of bcnt gene and its ruminant specific paralogous p97bcnt gene.</title>
        <authorList>
            <person name="Iwashita S."/>
        </authorList>
    </citation>
    <scope>NUCLEOTIDE SEQUENCE [GENOMIC DNA / MRNA]</scope>
    <source>
        <tissue>Spleen</tissue>
    </source>
</reference>
<name>CFDP1_CAMDR</name>
<proteinExistence type="evidence at transcript level"/>
<feature type="chain" id="PRO_0000212493" description="Craniofacial development protein 1">
    <location>
        <begin position="1"/>
        <end position="297"/>
    </location>
</feature>
<feature type="domain" description="BCNT-C" evidence="4">
    <location>
        <begin position="216"/>
        <end position="297"/>
    </location>
</feature>
<feature type="region of interest" description="Disordered" evidence="5">
    <location>
        <begin position="1"/>
        <end position="154"/>
    </location>
</feature>
<feature type="region of interest" description="Hydrophilic">
    <location>
        <begin position="176"/>
        <end position="215"/>
    </location>
</feature>
<feature type="region of interest" description="Disordered" evidence="5">
    <location>
        <begin position="190"/>
        <end position="221"/>
    </location>
</feature>
<feature type="compositionally biased region" description="Acidic residues" evidence="5">
    <location>
        <begin position="1"/>
        <end position="18"/>
    </location>
</feature>
<feature type="compositionally biased region" description="Acidic residues" evidence="5">
    <location>
        <begin position="25"/>
        <end position="43"/>
    </location>
</feature>
<feature type="compositionally biased region" description="Basic residues" evidence="5">
    <location>
        <begin position="48"/>
        <end position="65"/>
    </location>
</feature>
<feature type="compositionally biased region" description="Acidic residues" evidence="5">
    <location>
        <begin position="69"/>
        <end position="78"/>
    </location>
</feature>
<feature type="compositionally biased region" description="Basic and acidic residues" evidence="5">
    <location>
        <begin position="93"/>
        <end position="110"/>
    </location>
</feature>
<feature type="compositionally biased region" description="Basic and acidic residues" evidence="5">
    <location>
        <begin position="190"/>
        <end position="199"/>
    </location>
</feature>
<feature type="modified residue" description="Phosphoserine" evidence="2">
    <location>
        <position position="80"/>
    </location>
</feature>
<feature type="modified residue" description="Phosphoserine" evidence="2">
    <location>
        <position position="83"/>
    </location>
</feature>
<feature type="modified residue" description="Phosphoserine" evidence="2">
    <location>
        <position position="84"/>
    </location>
</feature>
<feature type="modified residue" description="Phosphoserine" evidence="3">
    <location>
        <position position="114"/>
    </location>
</feature>
<feature type="modified residue" description="Phosphoserine" evidence="3">
    <location>
        <position position="214"/>
    </location>
</feature>
<feature type="modified residue" description="N6-methyllysine" evidence="3">
    <location>
        <position position="217"/>
    </location>
</feature>
<feature type="modified residue" description="Phosphoserine" evidence="3">
    <location>
        <position position="248"/>
    </location>
</feature>
<feature type="cross-link" description="Glycyl lysine isopeptide (Lys-Gly) (interchain with G-Cter in SUMO2)" evidence="3">
    <location>
        <position position="148"/>
    </location>
</feature>
<organism>
    <name type="scientific">Camelus dromedarius</name>
    <name type="common">Dromedary</name>
    <name type="synonym">Arabian camel</name>
    <dbReference type="NCBI Taxonomy" id="9838"/>
    <lineage>
        <taxon>Eukaryota</taxon>
        <taxon>Metazoa</taxon>
        <taxon>Chordata</taxon>
        <taxon>Craniata</taxon>
        <taxon>Vertebrata</taxon>
        <taxon>Euteleostomi</taxon>
        <taxon>Mammalia</taxon>
        <taxon>Eutheria</taxon>
        <taxon>Laurasiatheria</taxon>
        <taxon>Artiodactyla</taxon>
        <taxon>Tylopoda</taxon>
        <taxon>Camelidae</taxon>
        <taxon>Camelus</taxon>
    </lineage>
</organism>
<accession>Q4ADK7</accession>
<accession>Q4ADK6</accession>
<sequence>MEEFDSEDFSTSEEDEDYVPSGGEYSEDDVNELVKEDEVDGEEQTQKTKGKKRKAQSIPARKRKQGLSLEEEEEDANEESGGSSSEEEDAAAEQEKGIGAEDARKKKEDELWASFLNDVGPKSKVPPSTQVKREEETEETGSSKLLVKAEELEKPKETEKVKITKVFDFAGEEVRVTKEVDATSKEAKSFFKQNEKEKPQTNVPAALPSLPAGSGLKRSSGMSNLLGKIGAKKQKMSTLEKSKLDWESFKEEEGIGEELAIHNRGKEGYIERKAFLDRVDHRQFEIERDLRLSKMKP</sequence>
<evidence type="ECO:0000250" key="1"/>
<evidence type="ECO:0000250" key="2">
    <source>
        <dbReference type="UniProtKB" id="Q75UQ2"/>
    </source>
</evidence>
<evidence type="ECO:0000250" key="3">
    <source>
        <dbReference type="UniProtKB" id="Q9UEE9"/>
    </source>
</evidence>
<evidence type="ECO:0000255" key="4">
    <source>
        <dbReference type="PROSITE-ProRule" id="PRU00610"/>
    </source>
</evidence>
<evidence type="ECO:0000256" key="5">
    <source>
        <dbReference type="SAM" id="MobiDB-lite"/>
    </source>
</evidence>
<keyword id="KW-0137">Centromere</keyword>
<keyword id="KW-0158">Chromosome</keyword>
<keyword id="KW-0217">Developmental protein</keyword>
<keyword id="KW-1017">Isopeptide bond</keyword>
<keyword id="KW-0995">Kinetochore</keyword>
<keyword id="KW-0488">Methylation</keyword>
<keyword id="KW-0597">Phosphoprotein</keyword>
<keyword id="KW-0832">Ubl conjugation</keyword>
<gene>
    <name type="primary">CFDP1</name>
    <name type="synonym">BCNT</name>
</gene>
<dbReference type="EMBL" id="AB213480">
    <property type="protein sequence ID" value="BAE19764.1"/>
    <property type="molecule type" value="mRNA"/>
</dbReference>
<dbReference type="EMBL" id="AB213481">
    <property type="protein sequence ID" value="BAE19765.1"/>
    <property type="molecule type" value="Genomic_DNA"/>
</dbReference>
<dbReference type="RefSeq" id="NP_001306805.1">
    <property type="nucleotide sequence ID" value="NM_001319876.1"/>
</dbReference>
<dbReference type="RefSeq" id="XP_010998949.1">
    <property type="nucleotide sequence ID" value="XM_011000647.1"/>
</dbReference>
<dbReference type="SMR" id="Q4ADK7"/>
<dbReference type="STRING" id="9838.ENSCDRP00005020816"/>
<dbReference type="GeneID" id="105106834"/>
<dbReference type="KEGG" id="cdk:105106834"/>
<dbReference type="CTD" id="10428"/>
<dbReference type="OrthoDB" id="445677at2759"/>
<dbReference type="GO" id="GO:0000776">
    <property type="term" value="C:kinetochore"/>
    <property type="evidence" value="ECO:0007669"/>
    <property type="project" value="UniProtKB-KW"/>
</dbReference>
<dbReference type="GO" id="GO:0000812">
    <property type="term" value="C:Swr1 complex"/>
    <property type="evidence" value="ECO:0007669"/>
    <property type="project" value="TreeGrafter"/>
</dbReference>
<dbReference type="InterPro" id="IPR011421">
    <property type="entry name" value="BCNT-C"/>
</dbReference>
<dbReference type="InterPro" id="IPR027124">
    <property type="entry name" value="Swc5/CFDP1/2"/>
</dbReference>
<dbReference type="PANTHER" id="PTHR48407">
    <property type="entry name" value="CRANIOFACIAL DEVELOPMENT PROTEIN 1"/>
    <property type="match status" value="1"/>
</dbReference>
<dbReference type="PANTHER" id="PTHR48407:SF1">
    <property type="entry name" value="CRANIOFACIAL DEVELOPMENT PROTEIN 1"/>
    <property type="match status" value="1"/>
</dbReference>
<dbReference type="Pfam" id="PF07572">
    <property type="entry name" value="BCNT"/>
    <property type="match status" value="1"/>
</dbReference>
<dbReference type="PROSITE" id="PS51279">
    <property type="entry name" value="BCNT_C"/>
    <property type="match status" value="1"/>
</dbReference>
<comment type="function">
    <text evidence="1">May play a role during embryogenesis.</text>
</comment>
<comment type="subcellular location">
    <subcellularLocation>
        <location evidence="3">Chromosome</location>
        <location evidence="3">Centromere</location>
        <location evidence="3">Kinetochore</location>
    </subcellularLocation>
</comment>
<protein>
    <recommendedName>
        <fullName>Craniofacial development protein 1</fullName>
    </recommendedName>
    <alternativeName>
        <fullName>Bucentaur</fullName>
    </alternativeName>
</protein>